<accession>B8IL55</accession>
<sequence>MNAPVNPKKLIKGALGDWEVVIGMEIHAQVTSRSKLFSGASTAFGAEPNDNVSLVDAAMPGMLPVINRECVAQAVRTGLGLKAQINHRSVFDRKNYFYPDLPQGYQISQYKSPIVGEGEVLVDLPEGETIRVGIERLHLEQDAGKSLHDQHPSLSFVDLNRSGVALMEIVSKPDLRSAEEAKAYVTKLRTILRYLGTCDGDMEKGNLRADVNVSVRRPGEFLGTRCEIKNVNSIRFIGQAIEAEARRQIAILEDGGVIEQETRLFDPNKGETRSMRSKEEAHDYRYFPDPDLLPLEIDDAFIDELKTELPELPDTKKARFVAEYGLSAYDATVLVAERASADYFEAVARGRDGKAAANWVINELFGRLNKEGHGIEDSPVSAEQLGAIIDLIADGTISGKIAKDLFEIVWSEGGDPRAIVESRGLRQVTDTGAIEAAVDQIIAANPDKVVQAQAKPTLLGWFVGQTMKATGGKANPAAVNALLKAKLGIE</sequence>
<reference key="1">
    <citation type="submission" date="2009-01" db="EMBL/GenBank/DDBJ databases">
        <title>Complete sequence of chromosome of Methylobacterium nodulans ORS 2060.</title>
        <authorList>
            <consortium name="US DOE Joint Genome Institute"/>
            <person name="Lucas S."/>
            <person name="Copeland A."/>
            <person name="Lapidus A."/>
            <person name="Glavina del Rio T."/>
            <person name="Dalin E."/>
            <person name="Tice H."/>
            <person name="Bruce D."/>
            <person name="Goodwin L."/>
            <person name="Pitluck S."/>
            <person name="Sims D."/>
            <person name="Brettin T."/>
            <person name="Detter J.C."/>
            <person name="Han C."/>
            <person name="Larimer F."/>
            <person name="Land M."/>
            <person name="Hauser L."/>
            <person name="Kyrpides N."/>
            <person name="Ivanova N."/>
            <person name="Marx C.J."/>
            <person name="Richardson P."/>
        </authorList>
    </citation>
    <scope>NUCLEOTIDE SEQUENCE [LARGE SCALE GENOMIC DNA]</scope>
    <source>
        <strain>LMG 21967 / CNCM I-2342 / ORS 2060</strain>
    </source>
</reference>
<protein>
    <recommendedName>
        <fullName evidence="1">Aspartyl/glutamyl-tRNA(Asn/Gln) amidotransferase subunit B</fullName>
        <shortName evidence="1">Asp/Glu-ADT subunit B</shortName>
        <ecNumber evidence="1">6.3.5.-</ecNumber>
    </recommendedName>
</protein>
<dbReference type="EC" id="6.3.5.-" evidence="1"/>
<dbReference type="EMBL" id="CP001349">
    <property type="protein sequence ID" value="ACL58243.1"/>
    <property type="molecule type" value="Genomic_DNA"/>
</dbReference>
<dbReference type="RefSeq" id="WP_015929906.1">
    <property type="nucleotide sequence ID" value="NC_011894.1"/>
</dbReference>
<dbReference type="SMR" id="B8IL55"/>
<dbReference type="STRING" id="460265.Mnod_3320"/>
<dbReference type="KEGG" id="mno:Mnod_3320"/>
<dbReference type="eggNOG" id="COG0064">
    <property type="taxonomic scope" value="Bacteria"/>
</dbReference>
<dbReference type="HOGENOM" id="CLU_019240_0_0_5"/>
<dbReference type="OrthoDB" id="9804078at2"/>
<dbReference type="Proteomes" id="UP000008207">
    <property type="component" value="Chromosome"/>
</dbReference>
<dbReference type="GO" id="GO:0050566">
    <property type="term" value="F:asparaginyl-tRNA synthase (glutamine-hydrolyzing) activity"/>
    <property type="evidence" value="ECO:0007669"/>
    <property type="project" value="RHEA"/>
</dbReference>
<dbReference type="GO" id="GO:0005524">
    <property type="term" value="F:ATP binding"/>
    <property type="evidence" value="ECO:0007669"/>
    <property type="project" value="UniProtKB-KW"/>
</dbReference>
<dbReference type="GO" id="GO:0050567">
    <property type="term" value="F:glutaminyl-tRNA synthase (glutamine-hydrolyzing) activity"/>
    <property type="evidence" value="ECO:0007669"/>
    <property type="project" value="UniProtKB-UniRule"/>
</dbReference>
<dbReference type="GO" id="GO:0070681">
    <property type="term" value="P:glutaminyl-tRNAGln biosynthesis via transamidation"/>
    <property type="evidence" value="ECO:0007669"/>
    <property type="project" value="TreeGrafter"/>
</dbReference>
<dbReference type="GO" id="GO:0006412">
    <property type="term" value="P:translation"/>
    <property type="evidence" value="ECO:0007669"/>
    <property type="project" value="UniProtKB-UniRule"/>
</dbReference>
<dbReference type="FunFam" id="1.10.10.410:FF:000001">
    <property type="entry name" value="Aspartyl/glutamyl-tRNA(Asn/Gln) amidotransferase subunit B"/>
    <property type="match status" value="1"/>
</dbReference>
<dbReference type="FunFam" id="1.10.150.380:FF:000001">
    <property type="entry name" value="Aspartyl/glutamyl-tRNA(Asn/Gln) amidotransferase subunit B"/>
    <property type="match status" value="1"/>
</dbReference>
<dbReference type="Gene3D" id="1.10.10.410">
    <property type="match status" value="1"/>
</dbReference>
<dbReference type="Gene3D" id="1.10.150.380">
    <property type="entry name" value="GatB domain, N-terminal subdomain"/>
    <property type="match status" value="1"/>
</dbReference>
<dbReference type="HAMAP" id="MF_00121">
    <property type="entry name" value="GatB"/>
    <property type="match status" value="1"/>
</dbReference>
<dbReference type="InterPro" id="IPR017959">
    <property type="entry name" value="Asn/Gln-tRNA_amidoTrfase_suB/E"/>
</dbReference>
<dbReference type="InterPro" id="IPR006075">
    <property type="entry name" value="Asn/Gln-tRNA_Trfase_suB/E_cat"/>
</dbReference>
<dbReference type="InterPro" id="IPR018027">
    <property type="entry name" value="Asn/Gln_amidotransferase"/>
</dbReference>
<dbReference type="InterPro" id="IPR003789">
    <property type="entry name" value="Asn/Gln_tRNA_amidoTrase-B-like"/>
</dbReference>
<dbReference type="InterPro" id="IPR004413">
    <property type="entry name" value="GatB"/>
</dbReference>
<dbReference type="InterPro" id="IPR042114">
    <property type="entry name" value="GatB_C_1"/>
</dbReference>
<dbReference type="InterPro" id="IPR023168">
    <property type="entry name" value="GatB_Yqey_C_2"/>
</dbReference>
<dbReference type="InterPro" id="IPR017958">
    <property type="entry name" value="Gln-tRNA_amidoTrfase_suB_CS"/>
</dbReference>
<dbReference type="InterPro" id="IPR014746">
    <property type="entry name" value="Gln_synth/guanido_kin_cat_dom"/>
</dbReference>
<dbReference type="NCBIfam" id="TIGR00133">
    <property type="entry name" value="gatB"/>
    <property type="match status" value="1"/>
</dbReference>
<dbReference type="NCBIfam" id="NF004012">
    <property type="entry name" value="PRK05477.1-2"/>
    <property type="match status" value="1"/>
</dbReference>
<dbReference type="NCBIfam" id="NF004014">
    <property type="entry name" value="PRK05477.1-4"/>
    <property type="match status" value="1"/>
</dbReference>
<dbReference type="NCBIfam" id="NF004015">
    <property type="entry name" value="PRK05477.1-5"/>
    <property type="match status" value="1"/>
</dbReference>
<dbReference type="PANTHER" id="PTHR11659">
    <property type="entry name" value="GLUTAMYL-TRNA GLN AMIDOTRANSFERASE SUBUNIT B MITOCHONDRIAL AND PROKARYOTIC PET112-RELATED"/>
    <property type="match status" value="1"/>
</dbReference>
<dbReference type="PANTHER" id="PTHR11659:SF0">
    <property type="entry name" value="GLUTAMYL-TRNA(GLN) AMIDOTRANSFERASE SUBUNIT B, MITOCHONDRIAL"/>
    <property type="match status" value="1"/>
</dbReference>
<dbReference type="Pfam" id="PF02934">
    <property type="entry name" value="GatB_N"/>
    <property type="match status" value="1"/>
</dbReference>
<dbReference type="Pfam" id="PF02637">
    <property type="entry name" value="GatB_Yqey"/>
    <property type="match status" value="1"/>
</dbReference>
<dbReference type="SMART" id="SM00845">
    <property type="entry name" value="GatB_Yqey"/>
    <property type="match status" value="1"/>
</dbReference>
<dbReference type="SUPFAM" id="SSF89095">
    <property type="entry name" value="GatB/YqeY motif"/>
    <property type="match status" value="1"/>
</dbReference>
<dbReference type="SUPFAM" id="SSF55931">
    <property type="entry name" value="Glutamine synthetase/guanido kinase"/>
    <property type="match status" value="1"/>
</dbReference>
<dbReference type="PROSITE" id="PS01234">
    <property type="entry name" value="GATB"/>
    <property type="match status" value="1"/>
</dbReference>
<feature type="chain" id="PRO_1000122526" description="Aspartyl/glutamyl-tRNA(Asn/Gln) amidotransferase subunit B">
    <location>
        <begin position="1"/>
        <end position="490"/>
    </location>
</feature>
<keyword id="KW-0067">ATP-binding</keyword>
<keyword id="KW-0436">Ligase</keyword>
<keyword id="KW-0547">Nucleotide-binding</keyword>
<keyword id="KW-0648">Protein biosynthesis</keyword>
<keyword id="KW-1185">Reference proteome</keyword>
<name>GATB_METNO</name>
<gene>
    <name evidence="1" type="primary">gatB</name>
    <name type="ordered locus">Mnod_3320</name>
</gene>
<organism>
    <name type="scientific">Methylobacterium nodulans (strain LMG 21967 / CNCM I-2342 / ORS 2060)</name>
    <dbReference type="NCBI Taxonomy" id="460265"/>
    <lineage>
        <taxon>Bacteria</taxon>
        <taxon>Pseudomonadati</taxon>
        <taxon>Pseudomonadota</taxon>
        <taxon>Alphaproteobacteria</taxon>
        <taxon>Hyphomicrobiales</taxon>
        <taxon>Methylobacteriaceae</taxon>
        <taxon>Methylobacterium</taxon>
    </lineage>
</organism>
<comment type="function">
    <text evidence="1">Allows the formation of correctly charged Asn-tRNA(Asn) or Gln-tRNA(Gln) through the transamidation of misacylated Asp-tRNA(Asn) or Glu-tRNA(Gln) in organisms which lack either or both of asparaginyl-tRNA or glutaminyl-tRNA synthetases. The reaction takes place in the presence of glutamine and ATP through an activated phospho-Asp-tRNA(Asn) or phospho-Glu-tRNA(Gln).</text>
</comment>
<comment type="catalytic activity">
    <reaction evidence="1">
        <text>L-glutamyl-tRNA(Gln) + L-glutamine + ATP + H2O = L-glutaminyl-tRNA(Gln) + L-glutamate + ADP + phosphate + H(+)</text>
        <dbReference type="Rhea" id="RHEA:17521"/>
        <dbReference type="Rhea" id="RHEA-COMP:9681"/>
        <dbReference type="Rhea" id="RHEA-COMP:9684"/>
        <dbReference type="ChEBI" id="CHEBI:15377"/>
        <dbReference type="ChEBI" id="CHEBI:15378"/>
        <dbReference type="ChEBI" id="CHEBI:29985"/>
        <dbReference type="ChEBI" id="CHEBI:30616"/>
        <dbReference type="ChEBI" id="CHEBI:43474"/>
        <dbReference type="ChEBI" id="CHEBI:58359"/>
        <dbReference type="ChEBI" id="CHEBI:78520"/>
        <dbReference type="ChEBI" id="CHEBI:78521"/>
        <dbReference type="ChEBI" id="CHEBI:456216"/>
    </reaction>
</comment>
<comment type="catalytic activity">
    <reaction evidence="1">
        <text>L-aspartyl-tRNA(Asn) + L-glutamine + ATP + H2O = L-asparaginyl-tRNA(Asn) + L-glutamate + ADP + phosphate + 2 H(+)</text>
        <dbReference type="Rhea" id="RHEA:14513"/>
        <dbReference type="Rhea" id="RHEA-COMP:9674"/>
        <dbReference type="Rhea" id="RHEA-COMP:9677"/>
        <dbReference type="ChEBI" id="CHEBI:15377"/>
        <dbReference type="ChEBI" id="CHEBI:15378"/>
        <dbReference type="ChEBI" id="CHEBI:29985"/>
        <dbReference type="ChEBI" id="CHEBI:30616"/>
        <dbReference type="ChEBI" id="CHEBI:43474"/>
        <dbReference type="ChEBI" id="CHEBI:58359"/>
        <dbReference type="ChEBI" id="CHEBI:78515"/>
        <dbReference type="ChEBI" id="CHEBI:78516"/>
        <dbReference type="ChEBI" id="CHEBI:456216"/>
    </reaction>
</comment>
<comment type="subunit">
    <text evidence="1">Heterotrimer of A, B and C subunits.</text>
</comment>
<comment type="similarity">
    <text evidence="1">Belongs to the GatB/GatE family. GatB subfamily.</text>
</comment>
<evidence type="ECO:0000255" key="1">
    <source>
        <dbReference type="HAMAP-Rule" id="MF_00121"/>
    </source>
</evidence>
<proteinExistence type="inferred from homology"/>